<keyword id="KW-0030">Aminoacyl-tRNA synthetase</keyword>
<keyword id="KW-0067">ATP-binding</keyword>
<keyword id="KW-0963">Cytoplasm</keyword>
<keyword id="KW-0436">Ligase</keyword>
<keyword id="KW-0547">Nucleotide-binding</keyword>
<keyword id="KW-0539">Nucleus</keyword>
<keyword id="KW-0648">Protein biosynthesis</keyword>
<keyword id="KW-1185">Reference proteome</keyword>
<keyword id="KW-0694">RNA-binding</keyword>
<keyword id="KW-0820">tRNA-binding</keyword>
<sequence length="527" mass="59284">METASGPQEKYQLITRNLQEVLGEDKLMAILKEREVKIYWGTATTGKPHVAYFVPMSKIADFLKAGCEVTILFADLHAYLDNMKAPWELLELRTRYYEHVIKAMLESIGVPLEKLKFIRGTDYQLSKEYTLDVYRLSSVVTQHDAKKAGAEVVKQVEHPLLSGLLYPGLQALDEEYLKVDAQFGGVDQRKIFTFAEKYLPSLGYAKRIHLMNPMVPGLTGSKMSSSEEDSKIDLLDRKEDVKKKLKKAFCEPGNIENNGVLSFIKHVLFPLKSEFVILREEKWGGNKTYTAYETLEKDFAEQVVHPGDLKNSVEAALNKLLDPIREKFNSPELKKLTNAAYPNPSKAKPAEKGTKNSEPETIVPSRLDIRVGKVVSVEKHPDADSLYVEKIDVGEPEPRTVVSGLVQFVPKEQLQDRLVVLLCNLKPQKMRGVESQGMVLCASSVGEPRQVEPLDPPAECCAGERVYVEGYEDGEPDDELKPKKKVFEKLQADFRISEDCIAQWKERNFLTKLGSISCKSLKGGSIS</sequence>
<name>SYYC_CHICK</name>
<gene>
    <name type="primary">YARS1</name>
    <name type="synonym">YARS</name>
    <name type="ORF">RCJMB04_21p3</name>
</gene>
<evidence type="ECO:0000250" key="1">
    <source>
        <dbReference type="UniProtKB" id="P54577"/>
    </source>
</evidence>
<evidence type="ECO:0000255" key="2">
    <source>
        <dbReference type="PROSITE-ProRule" id="PRU00209"/>
    </source>
</evidence>
<evidence type="ECO:0000256" key="3">
    <source>
        <dbReference type="SAM" id="MobiDB-lite"/>
    </source>
</evidence>
<evidence type="ECO:0000305" key="4"/>
<dbReference type="EC" id="6.1.1.1" evidence="1"/>
<dbReference type="EMBL" id="AJ720626">
    <property type="protein sequence ID" value="CAG32285.1"/>
    <property type="molecule type" value="mRNA"/>
</dbReference>
<dbReference type="RefSeq" id="NP_001006314.1">
    <property type="nucleotide sequence ID" value="NM_001006314.1"/>
</dbReference>
<dbReference type="SMR" id="Q5ZJ08"/>
<dbReference type="FunCoup" id="Q5ZJ08">
    <property type="interactions" value="2106"/>
</dbReference>
<dbReference type="STRING" id="9031.ENSGALP00000005633"/>
<dbReference type="PaxDb" id="9031-ENSGALP00000005633"/>
<dbReference type="KEGG" id="gga:419666"/>
<dbReference type="VEuPathDB" id="HostDB:geneid_419666"/>
<dbReference type="eggNOG" id="KOG2144">
    <property type="taxonomic scope" value="Eukaryota"/>
</dbReference>
<dbReference type="eggNOG" id="KOG2241">
    <property type="taxonomic scope" value="Eukaryota"/>
</dbReference>
<dbReference type="InParanoid" id="Q5ZJ08"/>
<dbReference type="OrthoDB" id="197206at2759"/>
<dbReference type="PhylomeDB" id="Q5ZJ08"/>
<dbReference type="PRO" id="PR:Q5ZJ08"/>
<dbReference type="Proteomes" id="UP000000539">
    <property type="component" value="Unassembled WGS sequence"/>
</dbReference>
<dbReference type="GO" id="GO:0005737">
    <property type="term" value="C:cytoplasm"/>
    <property type="evidence" value="ECO:0007669"/>
    <property type="project" value="UniProtKB-SubCell"/>
</dbReference>
<dbReference type="GO" id="GO:0005634">
    <property type="term" value="C:nucleus"/>
    <property type="evidence" value="ECO:0007669"/>
    <property type="project" value="UniProtKB-SubCell"/>
</dbReference>
<dbReference type="GO" id="GO:0005524">
    <property type="term" value="F:ATP binding"/>
    <property type="evidence" value="ECO:0007669"/>
    <property type="project" value="UniProtKB-KW"/>
</dbReference>
<dbReference type="GO" id="GO:0000049">
    <property type="term" value="F:tRNA binding"/>
    <property type="evidence" value="ECO:0007669"/>
    <property type="project" value="UniProtKB-KW"/>
</dbReference>
<dbReference type="GO" id="GO:0004831">
    <property type="term" value="F:tyrosine-tRNA ligase activity"/>
    <property type="evidence" value="ECO:0000318"/>
    <property type="project" value="GO_Central"/>
</dbReference>
<dbReference type="GO" id="GO:0006437">
    <property type="term" value="P:tyrosyl-tRNA aminoacylation"/>
    <property type="evidence" value="ECO:0007669"/>
    <property type="project" value="InterPro"/>
</dbReference>
<dbReference type="CDD" id="cd02799">
    <property type="entry name" value="tRNA_bind_EMAP-II_like"/>
    <property type="match status" value="1"/>
</dbReference>
<dbReference type="CDD" id="cd00805">
    <property type="entry name" value="TyrRS_core"/>
    <property type="match status" value="1"/>
</dbReference>
<dbReference type="FunFam" id="1.10.240.10:FF:000004">
    <property type="entry name" value="Tyrosine--tRNA ligase"/>
    <property type="match status" value="1"/>
</dbReference>
<dbReference type="FunFam" id="3.40.50.620:FF:000040">
    <property type="entry name" value="Tyrosine--tRNA ligase"/>
    <property type="match status" value="1"/>
</dbReference>
<dbReference type="FunFam" id="2.40.50.140:FF:000047">
    <property type="entry name" value="tyrosine--tRNA ligase, cytoplasmic isoform X2"/>
    <property type="match status" value="1"/>
</dbReference>
<dbReference type="Gene3D" id="3.40.50.620">
    <property type="entry name" value="HUPs"/>
    <property type="match status" value="1"/>
</dbReference>
<dbReference type="Gene3D" id="2.40.50.140">
    <property type="entry name" value="Nucleic acid-binding proteins"/>
    <property type="match status" value="1"/>
</dbReference>
<dbReference type="Gene3D" id="1.10.240.10">
    <property type="entry name" value="Tyrosyl-Transfer RNA Synthetase"/>
    <property type="match status" value="1"/>
</dbReference>
<dbReference type="InterPro" id="IPR002305">
    <property type="entry name" value="aa-tRNA-synth_Ic"/>
</dbReference>
<dbReference type="InterPro" id="IPR012340">
    <property type="entry name" value="NA-bd_OB-fold"/>
</dbReference>
<dbReference type="InterPro" id="IPR014729">
    <property type="entry name" value="Rossmann-like_a/b/a_fold"/>
</dbReference>
<dbReference type="InterPro" id="IPR002547">
    <property type="entry name" value="tRNA-bd_dom"/>
</dbReference>
<dbReference type="InterPro" id="IPR002307">
    <property type="entry name" value="Tyr-tRNA-ligase"/>
</dbReference>
<dbReference type="InterPro" id="IPR051270">
    <property type="entry name" value="Tyrosine-tRNA_ligase_regulator"/>
</dbReference>
<dbReference type="NCBIfam" id="NF006330">
    <property type="entry name" value="PRK08560.1"/>
    <property type="match status" value="1"/>
</dbReference>
<dbReference type="NCBIfam" id="TIGR00234">
    <property type="entry name" value="tyrS"/>
    <property type="match status" value="1"/>
</dbReference>
<dbReference type="PANTHER" id="PTHR11586">
    <property type="entry name" value="TRNA-AMINOACYLATION COFACTOR ARC1 FAMILY MEMBER"/>
    <property type="match status" value="1"/>
</dbReference>
<dbReference type="PANTHER" id="PTHR11586:SF43">
    <property type="entry name" value="TYROSINE--TRNA LIGASE, CYTOPLASMIC"/>
    <property type="match status" value="1"/>
</dbReference>
<dbReference type="Pfam" id="PF00579">
    <property type="entry name" value="tRNA-synt_1b"/>
    <property type="match status" value="1"/>
</dbReference>
<dbReference type="Pfam" id="PF01588">
    <property type="entry name" value="tRNA_bind"/>
    <property type="match status" value="1"/>
</dbReference>
<dbReference type="PRINTS" id="PR01040">
    <property type="entry name" value="TRNASYNTHTYR"/>
</dbReference>
<dbReference type="SUPFAM" id="SSF50249">
    <property type="entry name" value="Nucleic acid-binding proteins"/>
    <property type="match status" value="1"/>
</dbReference>
<dbReference type="SUPFAM" id="SSF52374">
    <property type="entry name" value="Nucleotidylyl transferase"/>
    <property type="match status" value="1"/>
</dbReference>
<dbReference type="PROSITE" id="PS50886">
    <property type="entry name" value="TRBD"/>
    <property type="match status" value="1"/>
</dbReference>
<proteinExistence type="evidence at transcript level"/>
<organism>
    <name type="scientific">Gallus gallus</name>
    <name type="common">Chicken</name>
    <dbReference type="NCBI Taxonomy" id="9031"/>
    <lineage>
        <taxon>Eukaryota</taxon>
        <taxon>Metazoa</taxon>
        <taxon>Chordata</taxon>
        <taxon>Craniata</taxon>
        <taxon>Vertebrata</taxon>
        <taxon>Euteleostomi</taxon>
        <taxon>Archelosauria</taxon>
        <taxon>Archosauria</taxon>
        <taxon>Dinosauria</taxon>
        <taxon>Saurischia</taxon>
        <taxon>Theropoda</taxon>
        <taxon>Coelurosauria</taxon>
        <taxon>Aves</taxon>
        <taxon>Neognathae</taxon>
        <taxon>Galloanserae</taxon>
        <taxon>Galliformes</taxon>
        <taxon>Phasianidae</taxon>
        <taxon>Phasianinae</taxon>
        <taxon>Gallus</taxon>
    </lineage>
</organism>
<protein>
    <recommendedName>
        <fullName>Tyrosine--tRNA ligase, cytoplasmic</fullName>
        <ecNumber evidence="1">6.1.1.1</ecNumber>
    </recommendedName>
    <alternativeName>
        <fullName>Tyrosyl-tRNA synthetase</fullName>
        <shortName>TyrRS</shortName>
    </alternativeName>
</protein>
<accession>Q5ZJ08</accession>
<feature type="chain" id="PRO_0000239692" description="Tyrosine--tRNA ligase, cytoplasmic">
    <location>
        <begin position="1"/>
        <end position="527"/>
    </location>
</feature>
<feature type="domain" description="tRNA-binding" evidence="2">
    <location>
        <begin position="363"/>
        <end position="467"/>
    </location>
</feature>
<feature type="region of interest" description="Disordered" evidence="3">
    <location>
        <begin position="337"/>
        <end position="362"/>
    </location>
</feature>
<feature type="short sequence motif" description="'HIGH' region" evidence="1">
    <location>
        <begin position="44"/>
        <end position="52"/>
    </location>
</feature>
<feature type="short sequence motif" description="'KMSKS' region" evidence="1">
    <location>
        <begin position="222"/>
        <end position="226"/>
    </location>
</feature>
<feature type="short sequence motif" description="Nuclear localization signal" evidence="1">
    <location>
        <begin position="242"/>
        <end position="247"/>
    </location>
</feature>
<feature type="compositionally biased region" description="Basic and acidic residues" evidence="3">
    <location>
        <begin position="348"/>
        <end position="358"/>
    </location>
</feature>
<feature type="binding site" evidence="1">
    <location>
        <position position="39"/>
    </location>
    <ligand>
        <name>L-tyrosine</name>
        <dbReference type="ChEBI" id="CHEBI:58315"/>
    </ligand>
</feature>
<feature type="binding site" evidence="1">
    <location>
        <position position="166"/>
    </location>
    <ligand>
        <name>L-tyrosine</name>
        <dbReference type="ChEBI" id="CHEBI:58315"/>
    </ligand>
</feature>
<feature type="binding site" evidence="1">
    <location>
        <position position="170"/>
    </location>
    <ligand>
        <name>L-tyrosine</name>
        <dbReference type="ChEBI" id="CHEBI:58315"/>
    </ligand>
</feature>
<feature type="binding site" evidence="1">
    <location>
        <position position="173"/>
    </location>
    <ligand>
        <name>L-tyrosine</name>
        <dbReference type="ChEBI" id="CHEBI:58315"/>
    </ligand>
</feature>
<feature type="binding site" evidence="1">
    <location>
        <position position="188"/>
    </location>
    <ligand>
        <name>L-tyrosine</name>
        <dbReference type="ChEBI" id="CHEBI:58315"/>
    </ligand>
</feature>
<comment type="function">
    <text evidence="1">Catalyzes the attachment of tyrosine to tRNA(Tyr) in a two-step reaction: tyrosine is first activated by ATP to form Tyr-AMP and then transferred to the acceptor end of tRNA(Tyr).</text>
</comment>
<comment type="catalytic activity">
    <reaction evidence="1">
        <text>tRNA(Tyr) + L-tyrosine + ATP = L-tyrosyl-tRNA(Tyr) + AMP + diphosphate + H(+)</text>
        <dbReference type="Rhea" id="RHEA:10220"/>
        <dbReference type="Rhea" id="RHEA-COMP:9706"/>
        <dbReference type="Rhea" id="RHEA-COMP:9707"/>
        <dbReference type="ChEBI" id="CHEBI:15378"/>
        <dbReference type="ChEBI" id="CHEBI:30616"/>
        <dbReference type="ChEBI" id="CHEBI:33019"/>
        <dbReference type="ChEBI" id="CHEBI:58315"/>
        <dbReference type="ChEBI" id="CHEBI:78442"/>
        <dbReference type="ChEBI" id="CHEBI:78536"/>
        <dbReference type="ChEBI" id="CHEBI:456215"/>
        <dbReference type="EC" id="6.1.1.1"/>
    </reaction>
    <physiologicalReaction direction="left-to-right" evidence="1">
        <dbReference type="Rhea" id="RHEA:10221"/>
    </physiologicalReaction>
</comment>
<comment type="subunit">
    <text evidence="1">Homodimer.</text>
</comment>
<comment type="subcellular location">
    <subcellularLocation>
        <location evidence="1">Cytoplasm</location>
    </subcellularLocation>
    <subcellularLocation>
        <location evidence="1">Nucleus</location>
    </subcellularLocation>
</comment>
<comment type="domain">
    <text evidence="1">The nuclear localization signal, which mediates localization to the nucleus, is also important for interacting with tRNA(Tyr), suggesting that it is sterically blocked when tRNA(Tyr) is bound.</text>
</comment>
<comment type="similarity">
    <text evidence="4">Belongs to the class-I aminoacyl-tRNA synthetase family.</text>
</comment>
<reference key="1">
    <citation type="journal article" date="2005" name="Genome Biol.">
        <title>Full-length cDNAs from chicken bursal lymphocytes to facilitate gene function analysis.</title>
        <authorList>
            <person name="Caldwell R.B."/>
            <person name="Kierzek A.M."/>
            <person name="Arakawa H."/>
            <person name="Bezzubov Y."/>
            <person name="Zaim J."/>
            <person name="Fiedler P."/>
            <person name="Kutter S."/>
            <person name="Blagodatski A."/>
            <person name="Kostovska D."/>
            <person name="Koter M."/>
            <person name="Plachy J."/>
            <person name="Carninci P."/>
            <person name="Hayashizaki Y."/>
            <person name="Buerstedde J.-M."/>
        </authorList>
    </citation>
    <scope>NUCLEOTIDE SEQUENCE [LARGE SCALE MRNA]</scope>
    <source>
        <strain>CB</strain>
        <tissue>Bursa of Fabricius</tissue>
    </source>
</reference>